<feature type="signal peptide" evidence="1">
    <location>
        <begin position="1"/>
        <end position="26"/>
    </location>
</feature>
<feature type="chain" id="PRO_0000024734" description="Probable outer membrane protein pmp1">
    <location>
        <begin position="27"/>
        <end position="922"/>
    </location>
</feature>
<feature type="domain" description="Autotransporter" evidence="2">
    <location>
        <begin position="620"/>
        <end position="922"/>
    </location>
</feature>
<feature type="sequence conflict" description="In Ref. 1; CAB37075." evidence="3" ref="1">
    <original>F</original>
    <variation>L</variation>
    <location>
        <position position="14"/>
    </location>
</feature>
<feature type="sequence conflict" description="In Ref. 5; AAP97939." evidence="3" ref="5">
    <original>A</original>
    <variation>P</variation>
    <location>
        <position position="251"/>
    </location>
</feature>
<feature type="sequence conflict" description="In Ref. 1; CAB37075." evidence="3" ref="1">
    <original>Y</original>
    <variation>C</variation>
    <location>
        <position position="375"/>
    </location>
</feature>
<feature type="sequence conflict" description="In Ref. 1; CAB37075." evidence="3" ref="1">
    <original>D</original>
    <variation>N</variation>
    <location>
        <position position="606"/>
    </location>
</feature>
<feature type="sequence conflict" description="In Ref. 5; AAP97939." evidence="3" ref="5">
    <original>S</original>
    <variation>P</variation>
    <location>
        <position position="836"/>
    </location>
</feature>
<protein>
    <recommendedName>
        <fullName>Probable outer membrane protein pmp1</fullName>
    </recommendedName>
    <alternativeName>
        <fullName>Outer membrane protein 6</fullName>
    </alternativeName>
    <alternativeName>
        <fullName>Polymorphic membrane protein 1</fullName>
    </alternativeName>
</protein>
<name>PMP1_CHLPN</name>
<dbReference type="EMBL" id="AJ133035">
    <property type="protein sequence ID" value="CAB37075.1"/>
    <property type="molecule type" value="Genomic_DNA"/>
</dbReference>
<dbReference type="EMBL" id="AE001363">
    <property type="protein sequence ID" value="AAD18163.1"/>
    <property type="molecule type" value="Genomic_DNA"/>
</dbReference>
<dbReference type="EMBL" id="AE002161">
    <property type="protein sequence ID" value="AAF38570.1"/>
    <property type="molecule type" value="Genomic_DNA"/>
</dbReference>
<dbReference type="EMBL" id="BA000008">
    <property type="protein sequence ID" value="BAA98215.1"/>
    <property type="molecule type" value="Genomic_DNA"/>
</dbReference>
<dbReference type="EMBL" id="AE009440">
    <property type="protein sequence ID" value="AAP97939.1"/>
    <property type="molecule type" value="Genomic_DNA"/>
</dbReference>
<dbReference type="PIR" id="B72131">
    <property type="entry name" value="B72131"/>
</dbReference>
<dbReference type="PIR" id="E86491">
    <property type="entry name" value="E86491"/>
</dbReference>
<dbReference type="PIR" id="F81539">
    <property type="entry name" value="F81539"/>
</dbReference>
<dbReference type="RefSeq" id="NP_224218.1">
    <property type="nucleotide sequence ID" value="NC_000922.1"/>
</dbReference>
<dbReference type="RefSeq" id="WP_010882660.1">
    <property type="nucleotide sequence ID" value="NZ_LN847257.1"/>
</dbReference>
<dbReference type="STRING" id="406984.CPK_ORF00506"/>
<dbReference type="GeneID" id="45050054"/>
<dbReference type="KEGG" id="cpa:CP_0770"/>
<dbReference type="KEGG" id="cpj:pmp_1"/>
<dbReference type="KEGG" id="cpn:CPn_0005"/>
<dbReference type="KEGG" id="cpt:CpB0006"/>
<dbReference type="PATRIC" id="fig|115713.3.peg.6"/>
<dbReference type="eggNOG" id="COG3210">
    <property type="taxonomic scope" value="Bacteria"/>
</dbReference>
<dbReference type="HOGENOM" id="CLU_004549_1_1_0"/>
<dbReference type="OrthoDB" id="16668at2"/>
<dbReference type="Proteomes" id="UP000000583">
    <property type="component" value="Chromosome"/>
</dbReference>
<dbReference type="Proteomes" id="UP000000801">
    <property type="component" value="Chromosome"/>
</dbReference>
<dbReference type="GO" id="GO:0009279">
    <property type="term" value="C:cell outer membrane"/>
    <property type="evidence" value="ECO:0007669"/>
    <property type="project" value="UniProtKB-SubCell"/>
</dbReference>
<dbReference type="GO" id="GO:0005576">
    <property type="term" value="C:extracellular region"/>
    <property type="evidence" value="ECO:0007669"/>
    <property type="project" value="UniProtKB-KW"/>
</dbReference>
<dbReference type="Gene3D" id="2.40.128.130">
    <property type="entry name" value="Autotransporter beta-domain"/>
    <property type="match status" value="1"/>
</dbReference>
<dbReference type="InterPro" id="IPR005546">
    <property type="entry name" value="Autotransporte_beta"/>
</dbReference>
<dbReference type="InterPro" id="IPR036709">
    <property type="entry name" value="Autotransporte_beta_dom_sf"/>
</dbReference>
<dbReference type="InterPro" id="IPR011427">
    <property type="entry name" value="Polymorphic_membr_middle"/>
</dbReference>
<dbReference type="InterPro" id="IPR003368">
    <property type="entry name" value="POMP_repeat"/>
</dbReference>
<dbReference type="NCBIfam" id="TIGR01376">
    <property type="entry name" value="POMP_repeat"/>
    <property type="match status" value="3"/>
</dbReference>
<dbReference type="Pfam" id="PF02415">
    <property type="entry name" value="Chlam_PMP"/>
    <property type="match status" value="1"/>
</dbReference>
<dbReference type="Pfam" id="PF07548">
    <property type="entry name" value="ChlamPMP_M"/>
    <property type="match status" value="1"/>
</dbReference>
<dbReference type="SMART" id="SM00869">
    <property type="entry name" value="Autotransporter"/>
    <property type="match status" value="1"/>
</dbReference>
<dbReference type="SUPFAM" id="SSF103515">
    <property type="entry name" value="Autotransporter"/>
    <property type="match status" value="1"/>
</dbReference>
<dbReference type="PROSITE" id="PS51208">
    <property type="entry name" value="AUTOTRANSPORTER"/>
    <property type="match status" value="1"/>
</dbReference>
<comment type="subcellular location">
    <subcellularLocation>
        <location>Secreted</location>
        <location>Cell wall</location>
    </subcellularLocation>
    <subcellularLocation>
        <location evidence="3">Cell outer membrane</location>
        <topology evidence="3">Peripheral membrane protein</topology>
        <orientation evidence="3">Extracellular side</orientation>
    </subcellularLocation>
</comment>
<comment type="developmental stage">
    <text>Elementary body.</text>
</comment>
<comment type="similarity">
    <text evidence="3">Belongs to the PMP outer membrane protein family.</text>
</comment>
<sequence length="922" mass="100458">MRFSLCGFPLVFSFTLLSVFDTSLSATTISLTPEDSFHGDSQNAERSYNVQAGDVYSLTGDVSISNVDNSALNKACFNVTSGSVTFAGNHHGLYFNNISSGTTKEGAVLCCQDPQATARFSGFSTLSFIQSPGDIKEQGCLYSKNALMLLNNYVVRFEQNQSKTKGGAISGANVTIVGNYDSVSFYQNAATFGGAIHSSGPLQIAVNQAEIRFAQNTAKNGSGGALYSDGDIDIDQNAYVLFRENEALTTAIGKGGAVCCLPTSGSSTPVPIVTFSDNKQLVFERNHSIMGGGAIYARKLSISSGGPTLFINNISYANSQNLGGAIAIDTGGEISLSAEKGTITFQGNRTSLPFLNGIHLLQNAKFLKLQARNGYSIEFYDPITSEADGSTQLNINGDPKNKEYTGTILFSGEKSLANDPRDFKSTIPQNVNLSAGYLVIKEGAEVTVSKFTQSPGSHLVLDLGTKLIASKEDIAITGLAIDIDSLSSSSTAAVIKANTANKQISVTDSIELISPTGNAYEDLRMRNSQTFPLLSLEPGAGGSVTVTAGDFLPVSPHYGFQGNWKLAWTGTGNKVGEFFWDKINYKPRPEKEGNLVPNILWGNAVDVRSLMQVQETHASSLQTDRGLWIDGIGNFFHVSASEDNIRYRHNSGGYVLSVNNEITPKHYTSMAFSQLFSRDKDYAVSNNEYRMYLGSYLYQYTTSLGNIFRYASRNPNVNVGILSRRFLQNPLMIFHFLCAYGHATNDMKTDYANFPMVKNSWRNNCWAIECGGSMPLLVFENGRLFQGAIPFMKLQLVYAYQGDFKETTADGRRFSNGSLTSISVPLGIRFEKLALSQDVLYDFSFSYIPDIFRKDPSCEAALVISGDSWLVPAAHVSRHAFVGSGTGRYHFNDYTELLCRGSIECRPHARNYNINCGSKFRF</sequence>
<keyword id="KW-0998">Cell outer membrane</keyword>
<keyword id="KW-0134">Cell wall</keyword>
<keyword id="KW-0472">Membrane</keyword>
<keyword id="KW-0964">Secreted</keyword>
<keyword id="KW-0732">Signal</keyword>
<keyword id="KW-0812">Transmembrane</keyword>
<keyword id="KW-1134">Transmembrane beta strand</keyword>
<gene>
    <name type="primary">pmp1</name>
    <name type="synonym">omp6</name>
    <name type="ordered locus">CPn_0005</name>
    <name type="ordered locus">CP_0770</name>
    <name type="ordered locus">CpB0006</name>
</gene>
<evidence type="ECO:0000255" key="1"/>
<evidence type="ECO:0000255" key="2">
    <source>
        <dbReference type="PROSITE-ProRule" id="PRU00556"/>
    </source>
</evidence>
<evidence type="ECO:0000305" key="3"/>
<reference key="1">
    <citation type="journal article" date="1999" name="Am. Heart J.">
        <title>Molecular biology of Chlamydia pneumoniae surface proteins and their role in immunopathogenicity.</title>
        <authorList>
            <person name="Christiansen G."/>
            <person name="Boesen T."/>
            <person name="Hjerno K."/>
            <person name="Daugaard L."/>
            <person name="Mygind P."/>
            <person name="Madsen A.S."/>
            <person name="Knudsen K."/>
            <person name="Falk E."/>
            <person name="Birkelund S."/>
        </authorList>
    </citation>
    <scope>NUCLEOTIDE SEQUENCE [GENOMIC DNA]</scope>
    <source>
        <strain>CWL029 / VR1310</strain>
    </source>
</reference>
<reference key="2">
    <citation type="journal article" date="1999" name="Nat. Genet.">
        <title>Comparative genomes of Chlamydia pneumoniae and C. trachomatis.</title>
        <authorList>
            <person name="Kalman S."/>
            <person name="Mitchell W.P."/>
            <person name="Marathe R."/>
            <person name="Lammel C.J."/>
            <person name="Fan J."/>
            <person name="Hyman R.W."/>
            <person name="Olinger L."/>
            <person name="Grimwood J."/>
            <person name="Davis R.W."/>
            <person name="Stephens R.S."/>
        </authorList>
    </citation>
    <scope>NUCLEOTIDE SEQUENCE [LARGE SCALE GENOMIC DNA]</scope>
    <source>
        <strain>CWL029</strain>
    </source>
</reference>
<reference key="3">
    <citation type="journal article" date="2000" name="Nucleic Acids Res.">
        <title>Genome sequences of Chlamydia trachomatis MoPn and Chlamydia pneumoniae AR39.</title>
        <authorList>
            <person name="Read T.D."/>
            <person name="Brunham R.C."/>
            <person name="Shen C."/>
            <person name="Gill S.R."/>
            <person name="Heidelberg J.F."/>
            <person name="White O."/>
            <person name="Hickey E.K."/>
            <person name="Peterson J.D."/>
            <person name="Utterback T.R."/>
            <person name="Berry K.J."/>
            <person name="Bass S."/>
            <person name="Linher K.D."/>
            <person name="Weidman J.F."/>
            <person name="Khouri H.M."/>
            <person name="Craven B."/>
            <person name="Bowman C."/>
            <person name="Dodson R.J."/>
            <person name="Gwinn M.L."/>
            <person name="Nelson W.C."/>
            <person name="DeBoy R.T."/>
            <person name="Kolonay J.F."/>
            <person name="McClarty G."/>
            <person name="Salzberg S.L."/>
            <person name="Eisen J.A."/>
            <person name="Fraser C.M."/>
        </authorList>
    </citation>
    <scope>NUCLEOTIDE SEQUENCE [LARGE SCALE GENOMIC DNA]</scope>
    <source>
        <strain>AR39</strain>
    </source>
</reference>
<reference key="4">
    <citation type="journal article" date="2000" name="Nucleic Acids Res.">
        <title>Comparison of whole genome sequences of Chlamydia pneumoniae J138 from Japan and CWL029 from USA.</title>
        <authorList>
            <person name="Shirai M."/>
            <person name="Hirakawa H."/>
            <person name="Kimoto M."/>
            <person name="Tabuchi M."/>
            <person name="Kishi F."/>
            <person name="Ouchi K."/>
            <person name="Shiba T."/>
            <person name="Ishii K."/>
            <person name="Hattori M."/>
            <person name="Kuhara S."/>
            <person name="Nakazawa T."/>
        </authorList>
    </citation>
    <scope>NUCLEOTIDE SEQUENCE [LARGE SCALE GENOMIC DNA]</scope>
    <source>
        <strain>J138</strain>
    </source>
</reference>
<reference key="5">
    <citation type="submission" date="2002-05" db="EMBL/GenBank/DDBJ databases">
        <title>The genome sequence of Chlamydia pneumoniae TW183 and comparison with other Chlamydia strains based on whole genome sequence analysis.</title>
        <authorList>
            <person name="Geng M.M."/>
            <person name="Schuhmacher A."/>
            <person name="Muehldorfer I."/>
            <person name="Bensch K.W."/>
            <person name="Schaefer K.P."/>
            <person name="Schneider S."/>
            <person name="Pohl T."/>
            <person name="Essig A."/>
            <person name="Marre R."/>
            <person name="Melchers K."/>
        </authorList>
    </citation>
    <scope>NUCLEOTIDE SEQUENCE [LARGE SCALE GENOMIC DNA]</scope>
    <source>
        <strain>TW-183</strain>
    </source>
</reference>
<accession>Q9Z9G5</accession>
<accession>Q9K1Y9</accession>
<accession>Q9Z4H9</accession>
<organism>
    <name type="scientific">Chlamydia pneumoniae</name>
    <name type="common">Chlamydophila pneumoniae</name>
    <dbReference type="NCBI Taxonomy" id="83558"/>
    <lineage>
        <taxon>Bacteria</taxon>
        <taxon>Pseudomonadati</taxon>
        <taxon>Chlamydiota</taxon>
        <taxon>Chlamydiia</taxon>
        <taxon>Chlamydiales</taxon>
        <taxon>Chlamydiaceae</taxon>
        <taxon>Chlamydia/Chlamydophila group</taxon>
        <taxon>Chlamydia</taxon>
    </lineage>
</organism>
<proteinExistence type="evidence at transcript level"/>